<keyword id="KW-0067">ATP-binding</keyword>
<keyword id="KW-0324">Glycolysis</keyword>
<keyword id="KW-0418">Kinase</keyword>
<keyword id="KW-0460">Magnesium</keyword>
<keyword id="KW-0479">Metal-binding</keyword>
<keyword id="KW-0547">Nucleotide-binding</keyword>
<keyword id="KW-0630">Potassium</keyword>
<keyword id="KW-0670">Pyruvate</keyword>
<keyword id="KW-0808">Transferase</keyword>
<evidence type="ECO:0000250" key="1"/>
<evidence type="ECO:0000250" key="2">
    <source>
        <dbReference type="UniProtKB" id="P14618"/>
    </source>
</evidence>
<evidence type="ECO:0000305" key="3"/>
<name>KPYK_STAAW</name>
<comment type="catalytic activity">
    <reaction>
        <text>pyruvate + ATP = phosphoenolpyruvate + ADP + H(+)</text>
        <dbReference type="Rhea" id="RHEA:18157"/>
        <dbReference type="ChEBI" id="CHEBI:15361"/>
        <dbReference type="ChEBI" id="CHEBI:15378"/>
        <dbReference type="ChEBI" id="CHEBI:30616"/>
        <dbReference type="ChEBI" id="CHEBI:58702"/>
        <dbReference type="ChEBI" id="CHEBI:456216"/>
        <dbReference type="EC" id="2.7.1.40"/>
    </reaction>
</comment>
<comment type="cofactor">
    <cofactor evidence="1">
        <name>Mg(2+)</name>
        <dbReference type="ChEBI" id="CHEBI:18420"/>
    </cofactor>
</comment>
<comment type="cofactor">
    <cofactor evidence="1">
        <name>K(+)</name>
        <dbReference type="ChEBI" id="CHEBI:29103"/>
    </cofactor>
</comment>
<comment type="pathway">
    <text>Carbohydrate degradation; glycolysis; pyruvate from D-glyceraldehyde 3-phosphate: step 5/5.</text>
</comment>
<comment type="similarity">
    <text evidence="3">Belongs to the pyruvate kinase family.</text>
</comment>
<comment type="similarity">
    <text evidence="3">In the C-terminal section; belongs to the PEP-utilizing enzyme family.</text>
</comment>
<sequence length="585" mass="63102">MRKTKIVCTIGPASESEEMIEKLINAGMNVARLNFSHGSHEEHKGRIDTIRKVAKRLDKIVAILLDTKGPEIRTHNMKDGIIELERGNEVIVSMNEVEGTPEKFSVTYENLINDVQVGSYILLDDGLIELQVKDIDHAKKEVKCDILNSGELKNKKGVNLPGVRVSLPGITEKDAEDIRFGIKENVDFIAASFVRRPSDVLEIREILEEQKANISVFPKIENQEGIDNIAEILEVSDGLMVARGDMGVEIPPEKVPMVQKDLIRQCNKLGKPVITATQMLDSMQRNPRATRAEASDVANAIYDGTDAVMLSGETAAGLYPEEAVKTMRNIAVSAEAAQDYKKLLSDRTKLVETSLVNAIGISVAHTALNLNVKAIVAATESGSTARTISKYRPHSDIIAVTPSEETARQCSIVWGVQPVVKKGRKSTDALLNNAVATAVETGRVSNGDLIIITAGVPTGETGTTNMMKIHLVGDEIANGQGIGRGSVVGTTLVAETVKDLEGKDLSDKVIVTNSIDETFVPYVEKALGLITEENGITSPSAIVGLEKGIPTVVGVEKAVKNISNNMLVTIDAAQGKIFEGYANVL</sequence>
<organism>
    <name type="scientific">Staphylococcus aureus (strain MW2)</name>
    <dbReference type="NCBI Taxonomy" id="196620"/>
    <lineage>
        <taxon>Bacteria</taxon>
        <taxon>Bacillati</taxon>
        <taxon>Bacillota</taxon>
        <taxon>Bacilli</taxon>
        <taxon>Bacillales</taxon>
        <taxon>Staphylococcaceae</taxon>
        <taxon>Staphylococcus</taxon>
    </lineage>
</organism>
<gene>
    <name type="primary">pyk</name>
    <name type="ordered locus">MW1641</name>
</gene>
<protein>
    <recommendedName>
        <fullName>Pyruvate kinase</fullName>
        <shortName>PK</shortName>
        <ecNumber>2.7.1.40</ecNumber>
    </recommendedName>
</protein>
<feature type="chain" id="PRO_0000294133" description="Pyruvate kinase">
    <location>
        <begin position="1"/>
        <end position="585"/>
    </location>
</feature>
<feature type="binding site" evidence="1">
    <location>
        <position position="32"/>
    </location>
    <ligand>
        <name>substrate</name>
    </ligand>
</feature>
<feature type="binding site" evidence="2">
    <location>
        <begin position="34"/>
        <end position="37"/>
    </location>
    <ligand>
        <name>ATP</name>
        <dbReference type="ChEBI" id="CHEBI:30616"/>
    </ligand>
</feature>
<feature type="binding site" evidence="1">
    <location>
        <position position="34"/>
    </location>
    <ligand>
        <name>K(+)</name>
        <dbReference type="ChEBI" id="CHEBI:29103"/>
    </ligand>
</feature>
<feature type="binding site" evidence="1">
    <location>
        <position position="36"/>
    </location>
    <ligand>
        <name>K(+)</name>
        <dbReference type="ChEBI" id="CHEBI:29103"/>
    </ligand>
</feature>
<feature type="binding site" evidence="1">
    <location>
        <position position="66"/>
    </location>
    <ligand>
        <name>K(+)</name>
        <dbReference type="ChEBI" id="CHEBI:29103"/>
    </ligand>
</feature>
<feature type="binding site" evidence="1">
    <location>
        <position position="67"/>
    </location>
    <ligand>
        <name>K(+)</name>
        <dbReference type="ChEBI" id="CHEBI:29103"/>
    </ligand>
</feature>
<feature type="binding site" evidence="2">
    <location>
        <position position="73"/>
    </location>
    <ligand>
        <name>ATP</name>
        <dbReference type="ChEBI" id="CHEBI:30616"/>
    </ligand>
</feature>
<feature type="binding site" evidence="2">
    <location>
        <position position="156"/>
    </location>
    <ligand>
        <name>ATP</name>
        <dbReference type="ChEBI" id="CHEBI:30616"/>
    </ligand>
</feature>
<feature type="binding site" evidence="1">
    <location>
        <position position="221"/>
    </location>
    <ligand>
        <name>Mg(2+)</name>
        <dbReference type="ChEBI" id="CHEBI:18420"/>
    </ligand>
</feature>
<feature type="binding site" evidence="1">
    <location>
        <position position="244"/>
    </location>
    <ligand>
        <name>substrate</name>
    </ligand>
</feature>
<feature type="binding site" evidence="1">
    <location>
        <position position="245"/>
    </location>
    <ligand>
        <name>Mg(2+)</name>
        <dbReference type="ChEBI" id="CHEBI:18420"/>
    </ligand>
</feature>
<feature type="binding site" evidence="1">
    <location>
        <position position="245"/>
    </location>
    <ligand>
        <name>substrate</name>
    </ligand>
</feature>
<feature type="binding site" evidence="1">
    <location>
        <position position="277"/>
    </location>
    <ligand>
        <name>substrate</name>
    </ligand>
</feature>
<feature type="site" description="Transition state stabilizer" evidence="1">
    <location>
        <position position="219"/>
    </location>
</feature>
<reference key="1">
    <citation type="journal article" date="2002" name="Lancet">
        <title>Genome and virulence determinants of high virulence community-acquired MRSA.</title>
        <authorList>
            <person name="Baba T."/>
            <person name="Takeuchi F."/>
            <person name="Kuroda M."/>
            <person name="Yuzawa H."/>
            <person name="Aoki K."/>
            <person name="Oguchi A."/>
            <person name="Nagai Y."/>
            <person name="Iwama N."/>
            <person name="Asano K."/>
            <person name="Naimi T."/>
            <person name="Kuroda H."/>
            <person name="Cui L."/>
            <person name="Yamamoto K."/>
            <person name="Hiramatsu K."/>
        </authorList>
    </citation>
    <scope>NUCLEOTIDE SEQUENCE [LARGE SCALE GENOMIC DNA]</scope>
    <source>
        <strain>MW2</strain>
    </source>
</reference>
<dbReference type="EC" id="2.7.1.40"/>
<dbReference type="EMBL" id="BA000033">
    <property type="protein sequence ID" value="BAB95506.1"/>
    <property type="molecule type" value="Genomic_DNA"/>
</dbReference>
<dbReference type="RefSeq" id="WP_001232648.1">
    <property type="nucleotide sequence ID" value="NC_003923.1"/>
</dbReference>
<dbReference type="SMR" id="Q7A0N4"/>
<dbReference type="KEGG" id="sam:MW1641"/>
<dbReference type="HOGENOM" id="CLU_015439_0_2_9"/>
<dbReference type="UniPathway" id="UPA00109">
    <property type="reaction ID" value="UER00188"/>
</dbReference>
<dbReference type="GO" id="GO:0005524">
    <property type="term" value="F:ATP binding"/>
    <property type="evidence" value="ECO:0007669"/>
    <property type="project" value="UniProtKB-KW"/>
</dbReference>
<dbReference type="GO" id="GO:0016301">
    <property type="term" value="F:kinase activity"/>
    <property type="evidence" value="ECO:0007669"/>
    <property type="project" value="UniProtKB-KW"/>
</dbReference>
<dbReference type="GO" id="GO:0000287">
    <property type="term" value="F:magnesium ion binding"/>
    <property type="evidence" value="ECO:0007669"/>
    <property type="project" value="InterPro"/>
</dbReference>
<dbReference type="GO" id="GO:0030955">
    <property type="term" value="F:potassium ion binding"/>
    <property type="evidence" value="ECO:0007669"/>
    <property type="project" value="InterPro"/>
</dbReference>
<dbReference type="GO" id="GO:0004743">
    <property type="term" value="F:pyruvate kinase activity"/>
    <property type="evidence" value="ECO:0007669"/>
    <property type="project" value="UniProtKB-EC"/>
</dbReference>
<dbReference type="FunFam" id="2.40.33.10:FF:000001">
    <property type="entry name" value="Pyruvate kinase"/>
    <property type="match status" value="1"/>
</dbReference>
<dbReference type="FunFam" id="3.20.20.60:FF:000001">
    <property type="entry name" value="Pyruvate kinase"/>
    <property type="match status" value="1"/>
</dbReference>
<dbReference type="FunFam" id="3.40.1380.20:FF:000017">
    <property type="entry name" value="Pyruvate kinase"/>
    <property type="match status" value="1"/>
</dbReference>
<dbReference type="Gene3D" id="3.20.20.60">
    <property type="entry name" value="Phosphoenolpyruvate-binding domains"/>
    <property type="match status" value="1"/>
</dbReference>
<dbReference type="Gene3D" id="3.50.30.10">
    <property type="entry name" value="Phosphohistidine domain"/>
    <property type="match status" value="1"/>
</dbReference>
<dbReference type="Gene3D" id="2.40.33.10">
    <property type="entry name" value="PK beta-barrel domain-like"/>
    <property type="match status" value="1"/>
</dbReference>
<dbReference type="Gene3D" id="3.40.1380.20">
    <property type="entry name" value="Pyruvate kinase, C-terminal domain"/>
    <property type="match status" value="1"/>
</dbReference>
<dbReference type="InterPro" id="IPR008279">
    <property type="entry name" value="PEP-util_enz_mobile_dom"/>
</dbReference>
<dbReference type="InterPro" id="IPR036637">
    <property type="entry name" value="Phosphohistidine_dom_sf"/>
</dbReference>
<dbReference type="InterPro" id="IPR001697">
    <property type="entry name" value="Pyr_Knase"/>
</dbReference>
<dbReference type="InterPro" id="IPR015813">
    <property type="entry name" value="Pyrv/PenolPyrv_kinase-like_dom"/>
</dbReference>
<dbReference type="InterPro" id="IPR040442">
    <property type="entry name" value="Pyrv_kinase-like_dom_sf"/>
</dbReference>
<dbReference type="InterPro" id="IPR011037">
    <property type="entry name" value="Pyrv_Knase-like_insert_dom_sf"/>
</dbReference>
<dbReference type="InterPro" id="IPR015793">
    <property type="entry name" value="Pyrv_Knase_brl"/>
</dbReference>
<dbReference type="InterPro" id="IPR015795">
    <property type="entry name" value="Pyrv_Knase_C"/>
</dbReference>
<dbReference type="InterPro" id="IPR036918">
    <property type="entry name" value="Pyrv_Knase_C_sf"/>
</dbReference>
<dbReference type="InterPro" id="IPR015806">
    <property type="entry name" value="Pyrv_Knase_insert_dom_sf"/>
</dbReference>
<dbReference type="NCBIfam" id="NF004491">
    <property type="entry name" value="PRK05826.1"/>
    <property type="match status" value="1"/>
</dbReference>
<dbReference type="NCBIfam" id="NF004978">
    <property type="entry name" value="PRK06354.1"/>
    <property type="match status" value="1"/>
</dbReference>
<dbReference type="NCBIfam" id="TIGR01064">
    <property type="entry name" value="pyruv_kin"/>
    <property type="match status" value="1"/>
</dbReference>
<dbReference type="PANTHER" id="PTHR11817">
    <property type="entry name" value="PYRUVATE KINASE"/>
    <property type="match status" value="1"/>
</dbReference>
<dbReference type="Pfam" id="PF00391">
    <property type="entry name" value="PEP-utilizers"/>
    <property type="match status" value="1"/>
</dbReference>
<dbReference type="Pfam" id="PF00224">
    <property type="entry name" value="PK"/>
    <property type="match status" value="1"/>
</dbReference>
<dbReference type="Pfam" id="PF02887">
    <property type="entry name" value="PK_C"/>
    <property type="match status" value="1"/>
</dbReference>
<dbReference type="PRINTS" id="PR01050">
    <property type="entry name" value="PYRUVTKNASE"/>
</dbReference>
<dbReference type="SUPFAM" id="SSF51621">
    <property type="entry name" value="Phosphoenolpyruvate/pyruvate domain"/>
    <property type="match status" value="1"/>
</dbReference>
<dbReference type="SUPFAM" id="SSF52009">
    <property type="entry name" value="Phosphohistidine domain"/>
    <property type="match status" value="1"/>
</dbReference>
<dbReference type="SUPFAM" id="SSF50800">
    <property type="entry name" value="PK beta-barrel domain-like"/>
    <property type="match status" value="1"/>
</dbReference>
<dbReference type="SUPFAM" id="SSF52935">
    <property type="entry name" value="PK C-terminal domain-like"/>
    <property type="match status" value="1"/>
</dbReference>
<proteinExistence type="inferred from homology"/>
<accession>Q7A0N4</accession>